<comment type="function">
    <text evidence="3">Catalyzes the N-acetylation of serotonin into N-acetylserotonin, the penultimate step in the synthesis of melatonin (PubMed:27121038). Catalyzes in vitro the N-acetylation of tryptamine to produce N-acetyltryptamine, 5-methoxytryptamine to produce melatonin and tyramine to produce N-acetyltyramine (PubMed:27121038).</text>
</comment>
<comment type="catalytic activity">
    <reaction evidence="3">
        <text>serotonin + acetyl-CoA = N-acetylserotonin + CoA + H(+)</text>
        <dbReference type="Rhea" id="RHEA:25217"/>
        <dbReference type="ChEBI" id="CHEBI:15378"/>
        <dbReference type="ChEBI" id="CHEBI:17697"/>
        <dbReference type="ChEBI" id="CHEBI:57287"/>
        <dbReference type="ChEBI" id="CHEBI:57288"/>
        <dbReference type="ChEBI" id="CHEBI:350546"/>
        <dbReference type="EC" id="2.3.1.87"/>
    </reaction>
    <physiologicalReaction direction="left-to-right" evidence="3">
        <dbReference type="Rhea" id="RHEA:25218"/>
    </physiologicalReaction>
</comment>
<comment type="catalytic activity">
    <reaction evidence="3">
        <text>tyramine + acetyl-CoA = N-acetyltyramine + CoA + H(+)</text>
        <dbReference type="Rhea" id="RHEA:66136"/>
        <dbReference type="ChEBI" id="CHEBI:15378"/>
        <dbReference type="ChEBI" id="CHEBI:57287"/>
        <dbReference type="ChEBI" id="CHEBI:57288"/>
        <dbReference type="ChEBI" id="CHEBI:125610"/>
        <dbReference type="ChEBI" id="CHEBI:327995"/>
    </reaction>
    <physiologicalReaction direction="left-to-right" evidence="3">
        <dbReference type="Rhea" id="RHEA:66137"/>
    </physiologicalReaction>
</comment>
<comment type="catalytic activity">
    <reaction evidence="3">
        <text>tryptamine + acetyl-CoA = N-acetyltryptamine + CoA + H(+)</text>
        <dbReference type="Rhea" id="RHEA:66196"/>
        <dbReference type="ChEBI" id="CHEBI:15378"/>
        <dbReference type="ChEBI" id="CHEBI:55515"/>
        <dbReference type="ChEBI" id="CHEBI:57287"/>
        <dbReference type="ChEBI" id="CHEBI:57288"/>
        <dbReference type="ChEBI" id="CHEBI:57887"/>
    </reaction>
    <physiologicalReaction direction="left-to-right" evidence="3">
        <dbReference type="Rhea" id="RHEA:66197"/>
    </physiologicalReaction>
</comment>
<comment type="catalytic activity">
    <reaction evidence="3">
        <text>5-methoxytryptamine + acetyl-CoA = melatonin + CoA + H(+)</text>
        <dbReference type="Rhea" id="RHEA:66144"/>
        <dbReference type="ChEBI" id="CHEBI:15378"/>
        <dbReference type="ChEBI" id="CHEBI:16796"/>
        <dbReference type="ChEBI" id="CHEBI:57287"/>
        <dbReference type="ChEBI" id="CHEBI:57288"/>
        <dbReference type="ChEBI" id="CHEBI:166874"/>
    </reaction>
    <physiologicalReaction direction="left-to-right" evidence="3">
        <dbReference type="Rhea" id="RHEA:66145"/>
    </physiologicalReaction>
</comment>
<comment type="biophysicochemical properties">
    <kinetics>
        <KM evidence="3">371 uM for serotonin</KM>
        <Vmax evidence="3">4.7 nmol/min/mg enzyme with serotonin as substrate</Vmax>
    </kinetics>
    <phDependence>
        <text evidence="3">Optimum pH is 8.8.</text>
    </phDependence>
    <temperatureDependence>
        <text evidence="3">Optimum temperature is 45 degrees Celsius.</text>
    </temperatureDependence>
</comment>
<comment type="pathway">
    <text evidence="5">Aromatic compound metabolism; melatonin biosynthesis; melatonin from serotonin: step 1/2.</text>
</comment>
<comment type="subcellular location">
    <subcellularLocation>
        <location evidence="3">Cytoplasm</location>
    </subcellularLocation>
    <subcellularLocation>
        <location evidence="3">Plastid</location>
        <location evidence="3">Chloroplast</location>
    </subcellularLocation>
</comment>
<comment type="induction">
    <text evidence="3">Down-regulated by cadmium.</text>
</comment>
<evidence type="ECO:0000255" key="1"/>
<evidence type="ECO:0000255" key="2">
    <source>
        <dbReference type="PROSITE-ProRule" id="PRU00532"/>
    </source>
</evidence>
<evidence type="ECO:0000269" key="3">
    <source>
    </source>
</evidence>
<evidence type="ECO:0000303" key="4">
    <source>
    </source>
</evidence>
<evidence type="ECO:0000305" key="5"/>
<evidence type="ECO:0000312" key="6">
    <source>
        <dbReference type="EMBL" id="BAD03558.1"/>
    </source>
</evidence>
<evidence type="ECO:0000312" key="7">
    <source>
        <dbReference type="EMBL" id="BAD33154.1"/>
    </source>
</evidence>
<evidence type="ECO:0000312" key="8">
    <source>
        <dbReference type="EMBL" id="BAT03408.1"/>
    </source>
</evidence>
<evidence type="ECO:0000312" key="9">
    <source>
        <dbReference type="EMBL" id="EAZ41221.1"/>
    </source>
</evidence>
<feature type="transit peptide" description="Chloroplast" evidence="1">
    <location>
        <begin position="1"/>
        <end position="41"/>
    </location>
</feature>
<feature type="chain" id="PRO_0000437953" description="Serotonin N-acetyltransferase 2, chloroplastic">
    <location>
        <begin position="42"/>
        <end position="200"/>
    </location>
</feature>
<feature type="domain" description="N-acetyltransferase" evidence="2">
    <location>
        <begin position="55"/>
        <end position="195"/>
    </location>
</feature>
<name>SNAT2_ORYSJ</name>
<dbReference type="EC" id="2.3.1.87" evidence="3"/>
<dbReference type="EMBL" id="AP004654">
    <property type="protein sequence ID" value="BAD33154.1"/>
    <property type="molecule type" value="Genomic_DNA"/>
</dbReference>
<dbReference type="EMBL" id="AP005406">
    <property type="protein sequence ID" value="BAD03558.1"/>
    <property type="molecule type" value="Genomic_DNA"/>
</dbReference>
<dbReference type="EMBL" id="AP008214">
    <property type="protein sequence ID" value="BAF22679.1"/>
    <property type="molecule type" value="Genomic_DNA"/>
</dbReference>
<dbReference type="EMBL" id="AP014964">
    <property type="protein sequence ID" value="BAT03408.1"/>
    <property type="molecule type" value="Genomic_DNA"/>
</dbReference>
<dbReference type="EMBL" id="CM000145">
    <property type="protein sequence ID" value="EAZ41221.1"/>
    <property type="molecule type" value="Genomic_DNA"/>
</dbReference>
<dbReference type="EMBL" id="AK068156">
    <property type="protein sequence ID" value="BAG90782.1"/>
    <property type="molecule type" value="mRNA"/>
</dbReference>
<dbReference type="RefSeq" id="XP_015648698.1">
    <property type="nucleotide sequence ID" value="XM_015793212.1"/>
</dbReference>
<dbReference type="SMR" id="Q6Z1Y6"/>
<dbReference type="FunCoup" id="Q6Z1Y6">
    <property type="interactions" value="23"/>
</dbReference>
<dbReference type="STRING" id="39947.Q6Z1Y6"/>
<dbReference type="PaxDb" id="39947-Q6Z1Y6"/>
<dbReference type="EnsemblPlants" id="Os08t0102000-01">
    <property type="protein sequence ID" value="Os08t0102000-01"/>
    <property type="gene ID" value="Os08g0102000"/>
</dbReference>
<dbReference type="Gramene" id="Os08t0102000-01">
    <property type="protein sequence ID" value="Os08t0102000-01"/>
    <property type="gene ID" value="Os08g0102000"/>
</dbReference>
<dbReference type="KEGG" id="dosa:Os08g0102000"/>
<dbReference type="eggNOG" id="ENOG502RZ2D">
    <property type="taxonomic scope" value="Eukaryota"/>
</dbReference>
<dbReference type="HOGENOM" id="CLU_086503_0_2_1"/>
<dbReference type="InParanoid" id="Q6Z1Y6"/>
<dbReference type="OMA" id="FARCTGD"/>
<dbReference type="OrthoDB" id="2744543at2759"/>
<dbReference type="BRENDA" id="2.3.1.87">
    <property type="organism ID" value="4460"/>
</dbReference>
<dbReference type="SABIO-RK" id="Q6Z1Y6"/>
<dbReference type="UniPathway" id="UPA00837">
    <property type="reaction ID" value="UER00815"/>
</dbReference>
<dbReference type="Proteomes" id="UP000000763">
    <property type="component" value="Chromosome 8"/>
</dbReference>
<dbReference type="Proteomes" id="UP000007752">
    <property type="component" value="Chromosome 8"/>
</dbReference>
<dbReference type="Proteomes" id="UP000059680">
    <property type="component" value="Chromosome 8"/>
</dbReference>
<dbReference type="GO" id="GO:0009507">
    <property type="term" value="C:chloroplast"/>
    <property type="evidence" value="ECO:0000314"/>
    <property type="project" value="UniProtKB"/>
</dbReference>
<dbReference type="GO" id="GO:0005737">
    <property type="term" value="C:cytoplasm"/>
    <property type="evidence" value="ECO:0000314"/>
    <property type="project" value="UniProtKB"/>
</dbReference>
<dbReference type="GO" id="GO:0004059">
    <property type="term" value="F:aralkylamine N-acetyltransferase activity"/>
    <property type="evidence" value="ECO:0000314"/>
    <property type="project" value="UniProtKB"/>
</dbReference>
<dbReference type="GO" id="GO:0008080">
    <property type="term" value="F:N-acetyltransferase activity"/>
    <property type="evidence" value="ECO:0000318"/>
    <property type="project" value="GO_Central"/>
</dbReference>
<dbReference type="GO" id="GO:0030187">
    <property type="term" value="P:melatonin biosynthetic process"/>
    <property type="evidence" value="ECO:0000314"/>
    <property type="project" value="UniProtKB"/>
</dbReference>
<dbReference type="CDD" id="cd04301">
    <property type="entry name" value="NAT_SF"/>
    <property type="match status" value="1"/>
</dbReference>
<dbReference type="FunFam" id="3.40.630.30:FF:000059">
    <property type="entry name" value="Putative acetyltransferase NSI"/>
    <property type="match status" value="1"/>
</dbReference>
<dbReference type="Gene3D" id="3.40.630.30">
    <property type="match status" value="1"/>
</dbReference>
<dbReference type="InterPro" id="IPR016181">
    <property type="entry name" value="Acyl_CoA_acyltransferase"/>
</dbReference>
<dbReference type="InterPro" id="IPR000182">
    <property type="entry name" value="GNAT_dom"/>
</dbReference>
<dbReference type="InterPro" id="IPR045039">
    <property type="entry name" value="NSI-like"/>
</dbReference>
<dbReference type="PANTHER" id="PTHR43626">
    <property type="entry name" value="ACYL-COA N-ACYLTRANSFERASE"/>
    <property type="match status" value="1"/>
</dbReference>
<dbReference type="PANTHER" id="PTHR43626:SF1">
    <property type="entry name" value="GCN5-RELATED N-ACETYLTRANSFERASE 1, CHLOROPLASTIC"/>
    <property type="match status" value="1"/>
</dbReference>
<dbReference type="Pfam" id="PF00583">
    <property type="entry name" value="Acetyltransf_1"/>
    <property type="match status" value="1"/>
</dbReference>
<dbReference type="SUPFAM" id="SSF55729">
    <property type="entry name" value="Acyl-CoA N-acyltransferases (Nat)"/>
    <property type="match status" value="1"/>
</dbReference>
<dbReference type="PROSITE" id="PS51186">
    <property type="entry name" value="GNAT"/>
    <property type="match status" value="1"/>
</dbReference>
<sequence length="200" mass="21660">MQMQAARPRVGVRPRGGIRPFPLPTLSFNNNSNRSACACACAVSVSDSELAARGFAVRRSSTGLDVGALNEVFARVGFPRRQEERLRRALEHSEVVWLEDSASSSAGRPVAFARAAGDGVFNAVVWDVVVEPSCQGLGLGRAVMERLVADLRGKGVSNIALYAEPRVVGFYRLLGFAMDPDAIRGMAFYRSRQQIQNTSS</sequence>
<protein>
    <recommendedName>
        <fullName evidence="4">Serotonin N-acetyltransferase 2, chloroplastic</fullName>
        <shortName evidence="4">OsSNAT2</shortName>
        <ecNumber evidence="3">2.3.1.87</ecNumber>
    </recommendedName>
</protein>
<organism>
    <name type="scientific">Oryza sativa subsp. japonica</name>
    <name type="common">Rice</name>
    <dbReference type="NCBI Taxonomy" id="39947"/>
    <lineage>
        <taxon>Eukaryota</taxon>
        <taxon>Viridiplantae</taxon>
        <taxon>Streptophyta</taxon>
        <taxon>Embryophyta</taxon>
        <taxon>Tracheophyta</taxon>
        <taxon>Spermatophyta</taxon>
        <taxon>Magnoliopsida</taxon>
        <taxon>Liliopsida</taxon>
        <taxon>Poales</taxon>
        <taxon>Poaceae</taxon>
        <taxon>BOP clade</taxon>
        <taxon>Oryzoideae</taxon>
        <taxon>Oryzeae</taxon>
        <taxon>Oryzinae</taxon>
        <taxon>Oryza</taxon>
        <taxon>Oryza sativa</taxon>
    </lineage>
</organism>
<keyword id="KW-0012">Acyltransferase</keyword>
<keyword id="KW-0150">Chloroplast</keyword>
<keyword id="KW-0963">Cytoplasm</keyword>
<keyword id="KW-0471">Melatonin biosynthesis</keyword>
<keyword id="KW-0934">Plastid</keyword>
<keyword id="KW-1185">Reference proteome</keyword>
<keyword id="KW-0808">Transferase</keyword>
<keyword id="KW-0809">Transit peptide</keyword>
<gene>
    <name evidence="4" type="primary">SNAT2</name>
    <name evidence="8" type="ordered locus">Os08g0102000</name>
    <name evidence="5" type="ordered locus">LOC_Os08g01170</name>
    <name evidence="6" type="ORF">B1147B12.22</name>
    <name evidence="9" type="ORF">OsJ_25726</name>
    <name evidence="7" type="ORF">P0015C07.5</name>
</gene>
<reference key="1">
    <citation type="journal article" date="2005" name="Nature">
        <title>The map-based sequence of the rice genome.</title>
        <authorList>
            <consortium name="International rice genome sequencing project (IRGSP)"/>
        </authorList>
    </citation>
    <scope>NUCLEOTIDE SEQUENCE [LARGE SCALE GENOMIC DNA]</scope>
    <source>
        <strain>cv. Nipponbare</strain>
    </source>
</reference>
<reference key="2">
    <citation type="journal article" date="2008" name="Nucleic Acids Res.">
        <title>The rice annotation project database (RAP-DB): 2008 update.</title>
        <authorList>
            <consortium name="The rice annotation project (RAP)"/>
        </authorList>
    </citation>
    <scope>GENOME REANNOTATION</scope>
    <source>
        <strain>cv. Nipponbare</strain>
    </source>
</reference>
<reference key="3">
    <citation type="journal article" date="2013" name="Rice">
        <title>Improvement of the Oryza sativa Nipponbare reference genome using next generation sequence and optical map data.</title>
        <authorList>
            <person name="Kawahara Y."/>
            <person name="de la Bastide M."/>
            <person name="Hamilton J.P."/>
            <person name="Kanamori H."/>
            <person name="McCombie W.R."/>
            <person name="Ouyang S."/>
            <person name="Schwartz D.C."/>
            <person name="Tanaka T."/>
            <person name="Wu J."/>
            <person name="Zhou S."/>
            <person name="Childs K.L."/>
            <person name="Davidson R.M."/>
            <person name="Lin H."/>
            <person name="Quesada-Ocampo L."/>
            <person name="Vaillancourt B."/>
            <person name="Sakai H."/>
            <person name="Lee S.S."/>
            <person name="Kim J."/>
            <person name="Numa H."/>
            <person name="Itoh T."/>
            <person name="Buell C.R."/>
            <person name="Matsumoto T."/>
        </authorList>
    </citation>
    <scope>GENOME REANNOTATION</scope>
    <source>
        <strain>cv. Nipponbare</strain>
    </source>
</reference>
<reference key="4">
    <citation type="journal article" date="2005" name="PLoS Biol.">
        <title>The genomes of Oryza sativa: a history of duplications.</title>
        <authorList>
            <person name="Yu J."/>
            <person name="Wang J."/>
            <person name="Lin W."/>
            <person name="Li S."/>
            <person name="Li H."/>
            <person name="Zhou J."/>
            <person name="Ni P."/>
            <person name="Dong W."/>
            <person name="Hu S."/>
            <person name="Zeng C."/>
            <person name="Zhang J."/>
            <person name="Zhang Y."/>
            <person name="Li R."/>
            <person name="Xu Z."/>
            <person name="Li S."/>
            <person name="Li X."/>
            <person name="Zheng H."/>
            <person name="Cong L."/>
            <person name="Lin L."/>
            <person name="Yin J."/>
            <person name="Geng J."/>
            <person name="Li G."/>
            <person name="Shi J."/>
            <person name="Liu J."/>
            <person name="Lv H."/>
            <person name="Li J."/>
            <person name="Wang J."/>
            <person name="Deng Y."/>
            <person name="Ran L."/>
            <person name="Shi X."/>
            <person name="Wang X."/>
            <person name="Wu Q."/>
            <person name="Li C."/>
            <person name="Ren X."/>
            <person name="Wang J."/>
            <person name="Wang X."/>
            <person name="Li D."/>
            <person name="Liu D."/>
            <person name="Zhang X."/>
            <person name="Ji Z."/>
            <person name="Zhao W."/>
            <person name="Sun Y."/>
            <person name="Zhang Z."/>
            <person name="Bao J."/>
            <person name="Han Y."/>
            <person name="Dong L."/>
            <person name="Ji J."/>
            <person name="Chen P."/>
            <person name="Wu S."/>
            <person name="Liu J."/>
            <person name="Xiao Y."/>
            <person name="Bu D."/>
            <person name="Tan J."/>
            <person name="Yang L."/>
            <person name="Ye C."/>
            <person name="Zhang J."/>
            <person name="Xu J."/>
            <person name="Zhou Y."/>
            <person name="Yu Y."/>
            <person name="Zhang B."/>
            <person name="Zhuang S."/>
            <person name="Wei H."/>
            <person name="Liu B."/>
            <person name="Lei M."/>
            <person name="Yu H."/>
            <person name="Li Y."/>
            <person name="Xu H."/>
            <person name="Wei S."/>
            <person name="He X."/>
            <person name="Fang L."/>
            <person name="Zhang Z."/>
            <person name="Zhang Y."/>
            <person name="Huang X."/>
            <person name="Su Z."/>
            <person name="Tong W."/>
            <person name="Li J."/>
            <person name="Tong Z."/>
            <person name="Li S."/>
            <person name="Ye J."/>
            <person name="Wang L."/>
            <person name="Fang L."/>
            <person name="Lei T."/>
            <person name="Chen C.-S."/>
            <person name="Chen H.-C."/>
            <person name="Xu Z."/>
            <person name="Li H."/>
            <person name="Huang H."/>
            <person name="Zhang F."/>
            <person name="Xu H."/>
            <person name="Li N."/>
            <person name="Zhao C."/>
            <person name="Li S."/>
            <person name="Dong L."/>
            <person name="Huang Y."/>
            <person name="Li L."/>
            <person name="Xi Y."/>
            <person name="Qi Q."/>
            <person name="Li W."/>
            <person name="Zhang B."/>
            <person name="Hu W."/>
            <person name="Zhang Y."/>
            <person name="Tian X."/>
            <person name="Jiao Y."/>
            <person name="Liang X."/>
            <person name="Jin J."/>
            <person name="Gao L."/>
            <person name="Zheng W."/>
            <person name="Hao B."/>
            <person name="Liu S.-M."/>
            <person name="Wang W."/>
            <person name="Yuan L."/>
            <person name="Cao M."/>
            <person name="McDermott J."/>
            <person name="Samudrala R."/>
            <person name="Wang J."/>
            <person name="Wong G.K.-S."/>
            <person name="Yang H."/>
        </authorList>
    </citation>
    <scope>NUCLEOTIDE SEQUENCE [LARGE SCALE GENOMIC DNA]</scope>
    <source>
        <strain>cv. Nipponbare</strain>
    </source>
</reference>
<reference key="5">
    <citation type="journal article" date="2003" name="Science">
        <title>Collection, mapping, and annotation of over 28,000 cDNA clones from japonica rice.</title>
        <authorList>
            <consortium name="The rice full-length cDNA consortium"/>
        </authorList>
    </citation>
    <scope>NUCLEOTIDE SEQUENCE [LARGE SCALE MRNA]</scope>
    <source>
        <strain>cv. Nipponbare</strain>
    </source>
</reference>
<reference key="6">
    <citation type="journal article" date="2016" name="J. Pineal Res.">
        <title>Cloning and characterization of the serotonin N-acetyltransferase-2 gene (SNAT2) in rice (Oryza sativa).</title>
        <authorList>
            <person name="Byeon Y."/>
            <person name="Lee H.Y."/>
            <person name="Back K."/>
        </authorList>
    </citation>
    <scope>FUNCTION</scope>
    <scope>CATALYTIC ACTIVITY</scope>
    <scope>BIOPHYSICOCHEMICAL PROPERTIES</scope>
    <scope>SUBCELLULAR LOCATION</scope>
    <scope>INDUCTION</scope>
</reference>
<accession>Q6Z1Y6</accession>
<proteinExistence type="evidence at protein level"/>